<evidence type="ECO:0000250" key="1"/>
<evidence type="ECO:0000255" key="2"/>
<evidence type="ECO:0000256" key="3">
    <source>
        <dbReference type="SAM" id="MobiDB-lite"/>
    </source>
</evidence>
<evidence type="ECO:0000305" key="4"/>
<reference key="1">
    <citation type="journal article" date="2000" name="DNA Res.">
        <title>Structural analysis of Arabidopsis thaliana chromosome 3. I. Sequence features of the regions of 4,504,864 bp covered by sixty P1 and TAC clones.</title>
        <authorList>
            <person name="Sato S."/>
            <person name="Nakamura Y."/>
            <person name="Kaneko T."/>
            <person name="Katoh T."/>
            <person name="Asamizu E."/>
            <person name="Tabata S."/>
        </authorList>
    </citation>
    <scope>NUCLEOTIDE SEQUENCE [LARGE SCALE GENOMIC DNA]</scope>
    <source>
        <strain>cv. Columbia</strain>
    </source>
</reference>
<reference key="2">
    <citation type="journal article" date="2017" name="Plant J.">
        <title>Araport11: a complete reannotation of the Arabidopsis thaliana reference genome.</title>
        <authorList>
            <person name="Cheng C.Y."/>
            <person name="Krishnakumar V."/>
            <person name="Chan A.P."/>
            <person name="Thibaud-Nissen F."/>
            <person name="Schobel S."/>
            <person name="Town C.D."/>
        </authorList>
    </citation>
    <scope>GENOME REANNOTATION</scope>
    <source>
        <strain>cv. Columbia</strain>
    </source>
</reference>
<reference key="3">
    <citation type="journal article" date="2003" name="Science">
        <title>Empirical analysis of transcriptional activity in the Arabidopsis genome.</title>
        <authorList>
            <person name="Yamada K."/>
            <person name="Lim J."/>
            <person name="Dale J.M."/>
            <person name="Chen H."/>
            <person name="Shinn P."/>
            <person name="Palm C.J."/>
            <person name="Southwick A.M."/>
            <person name="Wu H.C."/>
            <person name="Kim C.J."/>
            <person name="Nguyen M."/>
            <person name="Pham P.K."/>
            <person name="Cheuk R.F."/>
            <person name="Karlin-Newmann G."/>
            <person name="Liu S.X."/>
            <person name="Lam B."/>
            <person name="Sakano H."/>
            <person name="Wu T."/>
            <person name="Yu G."/>
            <person name="Miranda M."/>
            <person name="Quach H.L."/>
            <person name="Tripp M."/>
            <person name="Chang C.H."/>
            <person name="Lee J.M."/>
            <person name="Toriumi M.J."/>
            <person name="Chan M.M."/>
            <person name="Tang C.C."/>
            <person name="Onodera C.S."/>
            <person name="Deng J.M."/>
            <person name="Akiyama K."/>
            <person name="Ansari Y."/>
            <person name="Arakawa T."/>
            <person name="Banh J."/>
            <person name="Banno F."/>
            <person name="Bowser L."/>
            <person name="Brooks S.Y."/>
            <person name="Carninci P."/>
            <person name="Chao Q."/>
            <person name="Choy N."/>
            <person name="Enju A."/>
            <person name="Goldsmith A.D."/>
            <person name="Gurjal M."/>
            <person name="Hansen N.F."/>
            <person name="Hayashizaki Y."/>
            <person name="Johnson-Hopson C."/>
            <person name="Hsuan V.W."/>
            <person name="Iida K."/>
            <person name="Karnes M."/>
            <person name="Khan S."/>
            <person name="Koesema E."/>
            <person name="Ishida J."/>
            <person name="Jiang P.X."/>
            <person name="Jones T."/>
            <person name="Kawai J."/>
            <person name="Kamiya A."/>
            <person name="Meyers C."/>
            <person name="Nakajima M."/>
            <person name="Narusaka M."/>
            <person name="Seki M."/>
            <person name="Sakurai T."/>
            <person name="Satou M."/>
            <person name="Tamse R."/>
            <person name="Vaysberg M."/>
            <person name="Wallender E.K."/>
            <person name="Wong C."/>
            <person name="Yamamura Y."/>
            <person name="Yuan S."/>
            <person name="Shinozaki K."/>
            <person name="Davis R.W."/>
            <person name="Theologis A."/>
            <person name="Ecker J.R."/>
        </authorList>
    </citation>
    <scope>NUCLEOTIDE SEQUENCE [LARGE SCALE MRNA]</scope>
    <source>
        <strain>cv. Columbia</strain>
    </source>
</reference>
<reference key="4">
    <citation type="submission" date="2006-07" db="EMBL/GenBank/DDBJ databases">
        <title>Large-scale analysis of RIKEN Arabidopsis full-length (RAFL) cDNAs.</title>
        <authorList>
            <person name="Totoki Y."/>
            <person name="Seki M."/>
            <person name="Ishida J."/>
            <person name="Nakajima M."/>
            <person name="Enju A."/>
            <person name="Kamiya A."/>
            <person name="Narusaka M."/>
            <person name="Shin-i T."/>
            <person name="Nakagawa M."/>
            <person name="Sakamoto N."/>
            <person name="Oishi K."/>
            <person name="Kohara Y."/>
            <person name="Kobayashi M."/>
            <person name="Toyoda A."/>
            <person name="Sakaki Y."/>
            <person name="Sakurai T."/>
            <person name="Iida K."/>
            <person name="Akiyama K."/>
            <person name="Satou M."/>
            <person name="Toyoda T."/>
            <person name="Konagaya A."/>
            <person name="Carninci P."/>
            <person name="Kawai J."/>
            <person name="Hayashizaki Y."/>
            <person name="Shinozaki K."/>
        </authorList>
    </citation>
    <scope>NUCLEOTIDE SEQUENCE [LARGE SCALE MRNA]</scope>
    <source>
        <strain>cv. Columbia</strain>
    </source>
</reference>
<name>NIPA8_ARATH</name>
<keyword id="KW-1003">Cell membrane</keyword>
<keyword id="KW-0967">Endosome</keyword>
<keyword id="KW-0406">Ion transport</keyword>
<keyword id="KW-0460">Magnesium</keyword>
<keyword id="KW-0472">Membrane</keyword>
<keyword id="KW-1185">Reference proteome</keyword>
<keyword id="KW-0812">Transmembrane</keyword>
<keyword id="KW-1133">Transmembrane helix</keyword>
<keyword id="KW-0813">Transport</keyword>
<sequence length="441" mass="48409">MGEWVIGAFINIFGSVAINFGTNLLKLGHNERERLALQDGGGKMPLKPIIHNQTWRVGILVFLLGNCLNFISFGYAAQSLLAALGSIQFVSNIAFAYVVLNKMVTVKVLVATAFIVLGNVFLVAFGNHQSPVFTPEQLAEKYSNVTFLVYCGILILIVAVHHFLYRKGEVLISTPGQEISSYWKMLLPFSYAVVSGAIGSCSVLFAKSLSNLLRLAMSSSYQLHSWFTYSMLLLFLSTAGFWMTRLNEGLSLYDAILIVPMFQIAWTFFSICTGCIYFQEFQVFDALRTTMFILGMMCVFIGISLLAPDDTRGNETKDNSSSLDSIVSSSVPTEEDRLIPQSSEDGHSKDTRVVVQGMYMKAADLIAKTKTACLAALGFGEDSINASAILVMPMVSSKITGFRGNGLERAKILSMRGSGWSKLAMEEEGTRMLEKTISSKA</sequence>
<feature type="chain" id="PRO_0000430296" description="Probable magnesium transporter NIPA8">
    <location>
        <begin position="1"/>
        <end position="441"/>
    </location>
</feature>
<feature type="topological domain" description="Extracellular" evidence="2">
    <location>
        <begin position="1"/>
        <end position="4"/>
    </location>
</feature>
<feature type="transmembrane region" description="Helical; Name=1" evidence="2">
    <location>
        <begin position="5"/>
        <end position="25"/>
    </location>
</feature>
<feature type="topological domain" description="Cytoplasmic" evidence="2">
    <location>
        <begin position="26"/>
        <end position="56"/>
    </location>
</feature>
<feature type="transmembrane region" description="Helical; Name=2" evidence="2">
    <location>
        <begin position="57"/>
        <end position="77"/>
    </location>
</feature>
<feature type="topological domain" description="Extracellular" evidence="2">
    <location>
        <begin position="78"/>
        <end position="79"/>
    </location>
</feature>
<feature type="transmembrane region" description="Helical; Name=3" evidence="2">
    <location>
        <begin position="80"/>
        <end position="100"/>
    </location>
</feature>
<feature type="topological domain" description="Cytoplasmic" evidence="2">
    <location>
        <begin position="101"/>
        <end position="105"/>
    </location>
</feature>
<feature type="transmembrane region" description="Helical; Name=4" evidence="2">
    <location>
        <begin position="106"/>
        <end position="126"/>
    </location>
</feature>
<feature type="topological domain" description="Extracellular" evidence="2">
    <location>
        <begin position="127"/>
        <end position="144"/>
    </location>
</feature>
<feature type="transmembrane region" description="Helical; Name=5" evidence="2">
    <location>
        <begin position="145"/>
        <end position="165"/>
    </location>
</feature>
<feature type="topological domain" description="Cytoplasmic" evidence="2">
    <location>
        <begin position="166"/>
        <end position="184"/>
    </location>
</feature>
<feature type="transmembrane region" description="Helical; Name=6" evidence="2">
    <location>
        <begin position="185"/>
        <end position="205"/>
    </location>
</feature>
<feature type="topological domain" description="Extracellular" evidence="2">
    <location>
        <begin position="206"/>
        <end position="222"/>
    </location>
</feature>
<feature type="transmembrane region" description="Helical; Name=7" evidence="2">
    <location>
        <begin position="223"/>
        <end position="243"/>
    </location>
</feature>
<feature type="topological domain" description="Cytoplasmic" evidence="2">
    <location>
        <begin position="244"/>
        <end position="255"/>
    </location>
</feature>
<feature type="transmembrane region" description="Helical; Name=8" evidence="2">
    <location>
        <begin position="256"/>
        <end position="276"/>
    </location>
</feature>
<feature type="topological domain" description="Extracellular" evidence="2">
    <location>
        <begin position="277"/>
        <end position="288"/>
    </location>
</feature>
<feature type="transmembrane region" description="Helical; Name=9" evidence="2">
    <location>
        <begin position="289"/>
        <end position="309"/>
    </location>
</feature>
<feature type="topological domain" description="Cytoplasmic" evidence="2">
    <location>
        <begin position="310"/>
        <end position="441"/>
    </location>
</feature>
<feature type="region of interest" description="Disordered" evidence="3">
    <location>
        <begin position="313"/>
        <end position="347"/>
    </location>
</feature>
<feature type="compositionally biased region" description="Low complexity" evidence="3">
    <location>
        <begin position="320"/>
        <end position="330"/>
    </location>
</feature>
<feature type="compositionally biased region" description="Basic and acidic residues" evidence="3">
    <location>
        <begin position="334"/>
        <end position="347"/>
    </location>
</feature>
<organism>
    <name type="scientific">Arabidopsis thaliana</name>
    <name type="common">Mouse-ear cress</name>
    <dbReference type="NCBI Taxonomy" id="3702"/>
    <lineage>
        <taxon>Eukaryota</taxon>
        <taxon>Viridiplantae</taxon>
        <taxon>Streptophyta</taxon>
        <taxon>Embryophyta</taxon>
        <taxon>Tracheophyta</taxon>
        <taxon>Spermatophyta</taxon>
        <taxon>Magnoliopsida</taxon>
        <taxon>eudicotyledons</taxon>
        <taxon>Gunneridae</taxon>
        <taxon>Pentapetalae</taxon>
        <taxon>rosids</taxon>
        <taxon>malvids</taxon>
        <taxon>Brassicales</taxon>
        <taxon>Brassicaceae</taxon>
        <taxon>Camelineae</taxon>
        <taxon>Arabidopsis</taxon>
    </lineage>
</organism>
<comment type="function">
    <text evidence="1">Acts as a Mg(2+) transporter. Can also transport other divalent cations such as Fe(2+), Sr(2+), Ba(2+), Mn(2+) and Co(2+) but to a much less extent than Mg(2+) (By similarity).</text>
</comment>
<comment type="subunit">
    <text evidence="1">Homodimer.</text>
</comment>
<comment type="subcellular location">
    <subcellularLocation>
        <location evidence="1">Cell membrane</location>
        <topology evidence="1">Multi-pass membrane protein</topology>
    </subcellularLocation>
    <subcellularLocation>
        <location evidence="1">Early endosome</location>
    </subcellularLocation>
    <text evidence="1">Recruited to the cell membrane in response to low extracellular magnesium.</text>
</comment>
<comment type="similarity">
    <text evidence="4">Belongs to the NIPA (TC 2.A.7) family.</text>
</comment>
<comment type="sequence caution" evidence="4">
    <conflict type="erroneous gene model prediction">
        <sequence resource="EMBL-CDS" id="BAB01731"/>
    </conflict>
</comment>
<proteinExistence type="evidence at transcript level"/>
<gene>
    <name type="ordered locus">At3g26670</name>
    <name type="ORF">MLJ15.6</name>
</gene>
<dbReference type="EMBL" id="AB026648">
    <property type="protein sequence ID" value="BAB01731.1"/>
    <property type="status" value="ALT_SEQ"/>
    <property type="molecule type" value="Genomic_DNA"/>
</dbReference>
<dbReference type="EMBL" id="CP002686">
    <property type="protein sequence ID" value="AEE77193.1"/>
    <property type="molecule type" value="Genomic_DNA"/>
</dbReference>
<dbReference type="EMBL" id="CP002686">
    <property type="protein sequence ID" value="AEE77194.1"/>
    <property type="molecule type" value="Genomic_DNA"/>
</dbReference>
<dbReference type="EMBL" id="CP002686">
    <property type="protein sequence ID" value="AEE77195.1"/>
    <property type="molecule type" value="Genomic_DNA"/>
</dbReference>
<dbReference type="EMBL" id="CP002686">
    <property type="protein sequence ID" value="ANM64303.1"/>
    <property type="molecule type" value="Genomic_DNA"/>
</dbReference>
<dbReference type="EMBL" id="AY093129">
    <property type="protein sequence ID" value="AAM13128.1"/>
    <property type="molecule type" value="mRNA"/>
</dbReference>
<dbReference type="EMBL" id="BT006587">
    <property type="protein sequence ID" value="AAP31931.1"/>
    <property type="molecule type" value="mRNA"/>
</dbReference>
<dbReference type="EMBL" id="AK226900">
    <property type="protein sequence ID" value="BAE98977.1"/>
    <property type="molecule type" value="mRNA"/>
</dbReference>
<dbReference type="RefSeq" id="NP_001326342.1">
    <property type="nucleotide sequence ID" value="NM_001338815.1"/>
</dbReference>
<dbReference type="RefSeq" id="NP_189301.1">
    <property type="nucleotide sequence ID" value="NM_113578.4"/>
</dbReference>
<dbReference type="RefSeq" id="NP_850634.1">
    <property type="nucleotide sequence ID" value="NM_180303.4"/>
</dbReference>
<dbReference type="RefSeq" id="NP_974367.1">
    <property type="nucleotide sequence ID" value="NM_202638.2"/>
</dbReference>
<dbReference type="FunCoup" id="Q8RWF4">
    <property type="interactions" value="330"/>
</dbReference>
<dbReference type="PaxDb" id="3702-AT3G26670.2"/>
<dbReference type="ProteomicsDB" id="251173"/>
<dbReference type="EnsemblPlants" id="AT3G26670.1">
    <property type="protein sequence ID" value="AT3G26670.1"/>
    <property type="gene ID" value="AT3G26670"/>
</dbReference>
<dbReference type="EnsemblPlants" id="AT3G26670.2">
    <property type="protein sequence ID" value="AT3G26670.2"/>
    <property type="gene ID" value="AT3G26670"/>
</dbReference>
<dbReference type="EnsemblPlants" id="AT3G26670.3">
    <property type="protein sequence ID" value="AT3G26670.3"/>
    <property type="gene ID" value="AT3G26670"/>
</dbReference>
<dbReference type="EnsemblPlants" id="AT3G26670.4">
    <property type="protein sequence ID" value="AT3G26670.4"/>
    <property type="gene ID" value="AT3G26670"/>
</dbReference>
<dbReference type="GeneID" id="822279"/>
<dbReference type="Gramene" id="AT3G26670.1">
    <property type="protein sequence ID" value="AT3G26670.1"/>
    <property type="gene ID" value="AT3G26670"/>
</dbReference>
<dbReference type="Gramene" id="AT3G26670.2">
    <property type="protein sequence ID" value="AT3G26670.2"/>
    <property type="gene ID" value="AT3G26670"/>
</dbReference>
<dbReference type="Gramene" id="AT3G26670.3">
    <property type="protein sequence ID" value="AT3G26670.3"/>
    <property type="gene ID" value="AT3G26670"/>
</dbReference>
<dbReference type="Gramene" id="AT3G26670.4">
    <property type="protein sequence ID" value="AT3G26670.4"/>
    <property type="gene ID" value="AT3G26670"/>
</dbReference>
<dbReference type="KEGG" id="ath:AT3G26670"/>
<dbReference type="Araport" id="AT3G26670"/>
<dbReference type="TAIR" id="AT3G26670"/>
<dbReference type="eggNOG" id="KOG2922">
    <property type="taxonomic scope" value="Eukaryota"/>
</dbReference>
<dbReference type="HOGENOM" id="CLU_054115_0_0_1"/>
<dbReference type="InParanoid" id="Q8RWF4"/>
<dbReference type="OMA" id="YYGPLAC"/>
<dbReference type="OrthoDB" id="165382at2759"/>
<dbReference type="PhylomeDB" id="Q8RWF4"/>
<dbReference type="PRO" id="PR:Q8RWF4"/>
<dbReference type="Proteomes" id="UP000006548">
    <property type="component" value="Chromosome 3"/>
</dbReference>
<dbReference type="ExpressionAtlas" id="Q8RWF4">
    <property type="expression patterns" value="baseline and differential"/>
</dbReference>
<dbReference type="GO" id="GO:0005769">
    <property type="term" value="C:early endosome"/>
    <property type="evidence" value="ECO:0000250"/>
    <property type="project" value="UniProtKB"/>
</dbReference>
<dbReference type="GO" id="GO:0005886">
    <property type="term" value="C:plasma membrane"/>
    <property type="evidence" value="ECO:0000250"/>
    <property type="project" value="UniProtKB"/>
</dbReference>
<dbReference type="GO" id="GO:0015095">
    <property type="term" value="F:magnesium ion transmembrane transporter activity"/>
    <property type="evidence" value="ECO:0007669"/>
    <property type="project" value="InterPro"/>
</dbReference>
<dbReference type="GO" id="GO:0015693">
    <property type="term" value="P:magnesium ion transport"/>
    <property type="evidence" value="ECO:0000250"/>
    <property type="project" value="UniProtKB"/>
</dbReference>
<dbReference type="InterPro" id="IPR008521">
    <property type="entry name" value="Mg_trans_NIPA"/>
</dbReference>
<dbReference type="PANTHER" id="PTHR12570">
    <property type="match status" value="1"/>
</dbReference>
<dbReference type="PANTHER" id="PTHR12570:SF9">
    <property type="entry name" value="MAGNESIUM TRANSPORTER NIPA8-RELATED"/>
    <property type="match status" value="1"/>
</dbReference>
<dbReference type="Pfam" id="PF05653">
    <property type="entry name" value="Mg_trans_NIPA"/>
    <property type="match status" value="1"/>
</dbReference>
<dbReference type="SUPFAM" id="SSF103481">
    <property type="entry name" value="Multidrug resistance efflux transporter EmrE"/>
    <property type="match status" value="1"/>
</dbReference>
<accession>Q8RWF4</accession>
<accession>Q9LSE5</accession>
<protein>
    <recommendedName>
        <fullName>Probable magnesium transporter NIPA8</fullName>
    </recommendedName>
</protein>